<evidence type="ECO:0000255" key="1">
    <source>
        <dbReference type="HAMAP-Rule" id="MF_01690"/>
    </source>
</evidence>
<sequence length="375" mass="41296">MTCPVIELAQQLIRQPSISPDDKGCQDIMIAHLQTIGFTIERMPFGDTNNFWAYRGIGPTLAFAGHTDVVPAGDESQWEYPPFEPTIRNGMLYGRGAADMKGSLAAMIVAAERFVAAHPNHNGRLAFLITSDEEAKATHGTVKVVEALMSRNERLDYCLIGEPSSQHRLGDMVKNGRRGSLTANLTVHGIQGHVAYPHLADNPIHRVLPALQTLVNTHWDEGNEFFPATSMQIANIHAGTGSHNVIPGNVQVQFNFRFSTELTDSQIREQVETILKNHNLNYTIEWILAGQPFLTAKGELVNAVIQSIDQYCGYQPELSTSGGTSDGRFIAQMGAQVVELGPLNSTIHKVNESVSAADLQQLSRIYQRVMEQLIQ</sequence>
<protein>
    <recommendedName>
        <fullName evidence="1">Succinyl-diaminopimelate desuccinylase</fullName>
        <shortName evidence="1">SDAP desuccinylase</shortName>
        <ecNumber evidence="1">3.5.1.18</ecNumber>
    </recommendedName>
    <alternativeName>
        <fullName evidence="1">N-succinyl-LL-2,6-diaminoheptanedioate amidohydrolase</fullName>
    </alternativeName>
</protein>
<dbReference type="EC" id="3.5.1.18" evidence="1"/>
<dbReference type="EMBL" id="BX571868">
    <property type="protein sequence ID" value="CAE15096.1"/>
    <property type="molecule type" value="Genomic_DNA"/>
</dbReference>
<dbReference type="RefSeq" id="WP_011146943.1">
    <property type="nucleotide sequence ID" value="NC_005126.1"/>
</dbReference>
<dbReference type="SMR" id="Q7N3J4"/>
<dbReference type="STRING" id="243265.plu2722"/>
<dbReference type="MEROPS" id="M20.010"/>
<dbReference type="GeneID" id="48848983"/>
<dbReference type="KEGG" id="plu:plu2722"/>
<dbReference type="eggNOG" id="COG0624">
    <property type="taxonomic scope" value="Bacteria"/>
</dbReference>
<dbReference type="HOGENOM" id="CLU_021802_4_0_6"/>
<dbReference type="OrthoDB" id="9809784at2"/>
<dbReference type="UniPathway" id="UPA00034">
    <property type="reaction ID" value="UER00021"/>
</dbReference>
<dbReference type="Proteomes" id="UP000002514">
    <property type="component" value="Chromosome"/>
</dbReference>
<dbReference type="GO" id="GO:0008777">
    <property type="term" value="F:acetylornithine deacetylase activity"/>
    <property type="evidence" value="ECO:0007669"/>
    <property type="project" value="TreeGrafter"/>
</dbReference>
<dbReference type="GO" id="GO:0050897">
    <property type="term" value="F:cobalt ion binding"/>
    <property type="evidence" value="ECO:0007669"/>
    <property type="project" value="UniProtKB-UniRule"/>
</dbReference>
<dbReference type="GO" id="GO:0009014">
    <property type="term" value="F:succinyl-diaminopimelate desuccinylase activity"/>
    <property type="evidence" value="ECO:0007669"/>
    <property type="project" value="UniProtKB-UniRule"/>
</dbReference>
<dbReference type="GO" id="GO:0008270">
    <property type="term" value="F:zinc ion binding"/>
    <property type="evidence" value="ECO:0007669"/>
    <property type="project" value="UniProtKB-UniRule"/>
</dbReference>
<dbReference type="GO" id="GO:0019877">
    <property type="term" value="P:diaminopimelate biosynthetic process"/>
    <property type="evidence" value="ECO:0007669"/>
    <property type="project" value="UniProtKB-UniRule"/>
</dbReference>
<dbReference type="GO" id="GO:0006526">
    <property type="term" value="P:L-arginine biosynthetic process"/>
    <property type="evidence" value="ECO:0007669"/>
    <property type="project" value="TreeGrafter"/>
</dbReference>
<dbReference type="GO" id="GO:0009089">
    <property type="term" value="P:lysine biosynthetic process via diaminopimelate"/>
    <property type="evidence" value="ECO:0007669"/>
    <property type="project" value="UniProtKB-UniRule"/>
</dbReference>
<dbReference type="CDD" id="cd03891">
    <property type="entry name" value="M20_DapE_proteobac"/>
    <property type="match status" value="1"/>
</dbReference>
<dbReference type="FunFam" id="3.40.630.10:FF:000005">
    <property type="entry name" value="Succinyl-diaminopimelate desuccinylase"/>
    <property type="match status" value="1"/>
</dbReference>
<dbReference type="FunFam" id="3.40.630.10:FF:000010">
    <property type="entry name" value="Succinyl-diaminopimelate desuccinylase"/>
    <property type="match status" value="1"/>
</dbReference>
<dbReference type="Gene3D" id="3.40.630.10">
    <property type="entry name" value="Zn peptidases"/>
    <property type="match status" value="2"/>
</dbReference>
<dbReference type="HAMAP" id="MF_01690">
    <property type="entry name" value="DapE"/>
    <property type="match status" value="1"/>
</dbReference>
<dbReference type="InterPro" id="IPR001261">
    <property type="entry name" value="ArgE/DapE_CS"/>
</dbReference>
<dbReference type="InterPro" id="IPR036264">
    <property type="entry name" value="Bact_exopeptidase_dim_dom"/>
</dbReference>
<dbReference type="InterPro" id="IPR005941">
    <property type="entry name" value="DapE_proteobac"/>
</dbReference>
<dbReference type="InterPro" id="IPR002933">
    <property type="entry name" value="Peptidase_M20"/>
</dbReference>
<dbReference type="InterPro" id="IPR011650">
    <property type="entry name" value="Peptidase_M20_dimer"/>
</dbReference>
<dbReference type="InterPro" id="IPR050072">
    <property type="entry name" value="Peptidase_M20A"/>
</dbReference>
<dbReference type="NCBIfam" id="TIGR01246">
    <property type="entry name" value="dapE_proteo"/>
    <property type="match status" value="1"/>
</dbReference>
<dbReference type="NCBIfam" id="NF009557">
    <property type="entry name" value="PRK13009.1"/>
    <property type="match status" value="1"/>
</dbReference>
<dbReference type="PANTHER" id="PTHR43808">
    <property type="entry name" value="ACETYLORNITHINE DEACETYLASE"/>
    <property type="match status" value="1"/>
</dbReference>
<dbReference type="PANTHER" id="PTHR43808:SF31">
    <property type="entry name" value="N-ACETYL-L-CITRULLINE DEACETYLASE"/>
    <property type="match status" value="1"/>
</dbReference>
<dbReference type="Pfam" id="PF07687">
    <property type="entry name" value="M20_dimer"/>
    <property type="match status" value="1"/>
</dbReference>
<dbReference type="Pfam" id="PF01546">
    <property type="entry name" value="Peptidase_M20"/>
    <property type="match status" value="1"/>
</dbReference>
<dbReference type="SUPFAM" id="SSF55031">
    <property type="entry name" value="Bacterial exopeptidase dimerisation domain"/>
    <property type="match status" value="1"/>
</dbReference>
<dbReference type="SUPFAM" id="SSF53187">
    <property type="entry name" value="Zn-dependent exopeptidases"/>
    <property type="match status" value="1"/>
</dbReference>
<dbReference type="PROSITE" id="PS00758">
    <property type="entry name" value="ARGE_DAPE_CPG2_1"/>
    <property type="match status" value="1"/>
</dbReference>
<organism>
    <name type="scientific">Photorhabdus laumondii subsp. laumondii (strain DSM 15139 / CIP 105565 / TT01)</name>
    <name type="common">Photorhabdus luminescens subsp. laumondii</name>
    <dbReference type="NCBI Taxonomy" id="243265"/>
    <lineage>
        <taxon>Bacteria</taxon>
        <taxon>Pseudomonadati</taxon>
        <taxon>Pseudomonadota</taxon>
        <taxon>Gammaproteobacteria</taxon>
        <taxon>Enterobacterales</taxon>
        <taxon>Morganellaceae</taxon>
        <taxon>Photorhabdus</taxon>
    </lineage>
</organism>
<accession>Q7N3J4</accession>
<comment type="function">
    <text evidence="1">Catalyzes the hydrolysis of N-succinyl-L,L-diaminopimelic acid (SDAP), forming succinate and LL-2,6-diaminopimelate (DAP), an intermediate involved in the bacterial biosynthesis of lysine and meso-diaminopimelic acid, an essential component of bacterial cell walls.</text>
</comment>
<comment type="catalytic activity">
    <reaction evidence="1">
        <text>N-succinyl-(2S,6S)-2,6-diaminopimelate + H2O = (2S,6S)-2,6-diaminopimelate + succinate</text>
        <dbReference type="Rhea" id="RHEA:22608"/>
        <dbReference type="ChEBI" id="CHEBI:15377"/>
        <dbReference type="ChEBI" id="CHEBI:30031"/>
        <dbReference type="ChEBI" id="CHEBI:57609"/>
        <dbReference type="ChEBI" id="CHEBI:58087"/>
        <dbReference type="EC" id="3.5.1.18"/>
    </reaction>
</comment>
<comment type="cofactor">
    <cofactor evidence="1">
        <name>Zn(2+)</name>
        <dbReference type="ChEBI" id="CHEBI:29105"/>
    </cofactor>
    <cofactor evidence="1">
        <name>Co(2+)</name>
        <dbReference type="ChEBI" id="CHEBI:48828"/>
    </cofactor>
    <text evidence="1">Binds 2 Zn(2+) or Co(2+) ions per subunit.</text>
</comment>
<comment type="pathway">
    <text evidence="1">Amino-acid biosynthesis; L-lysine biosynthesis via DAP pathway; LL-2,6-diaminopimelate from (S)-tetrahydrodipicolinate (succinylase route): step 3/3.</text>
</comment>
<comment type="subunit">
    <text evidence="1">Homodimer.</text>
</comment>
<comment type="similarity">
    <text evidence="1">Belongs to the peptidase M20A family. DapE subfamily.</text>
</comment>
<name>DAPE_PHOLL</name>
<reference key="1">
    <citation type="journal article" date="2003" name="Nat. Biotechnol.">
        <title>The genome sequence of the entomopathogenic bacterium Photorhabdus luminescens.</title>
        <authorList>
            <person name="Duchaud E."/>
            <person name="Rusniok C."/>
            <person name="Frangeul L."/>
            <person name="Buchrieser C."/>
            <person name="Givaudan A."/>
            <person name="Taourit S."/>
            <person name="Bocs S."/>
            <person name="Boursaux-Eude C."/>
            <person name="Chandler M."/>
            <person name="Charles J.-F."/>
            <person name="Dassa E."/>
            <person name="Derose R."/>
            <person name="Derzelle S."/>
            <person name="Freyssinet G."/>
            <person name="Gaudriault S."/>
            <person name="Medigue C."/>
            <person name="Lanois A."/>
            <person name="Powell K."/>
            <person name="Siguier P."/>
            <person name="Vincent R."/>
            <person name="Wingate V."/>
            <person name="Zouine M."/>
            <person name="Glaser P."/>
            <person name="Boemare N."/>
            <person name="Danchin A."/>
            <person name="Kunst F."/>
        </authorList>
    </citation>
    <scope>NUCLEOTIDE SEQUENCE [LARGE SCALE GENOMIC DNA]</scope>
    <source>
        <strain>DSM 15139 / CIP 105565 / TT01</strain>
    </source>
</reference>
<proteinExistence type="inferred from homology"/>
<gene>
    <name evidence="1" type="primary">dapE</name>
    <name type="ordered locus">plu2722</name>
</gene>
<keyword id="KW-0028">Amino-acid biosynthesis</keyword>
<keyword id="KW-0170">Cobalt</keyword>
<keyword id="KW-0220">Diaminopimelate biosynthesis</keyword>
<keyword id="KW-0378">Hydrolase</keyword>
<keyword id="KW-0457">Lysine biosynthesis</keyword>
<keyword id="KW-0479">Metal-binding</keyword>
<keyword id="KW-1185">Reference proteome</keyword>
<keyword id="KW-0862">Zinc</keyword>
<feature type="chain" id="PRO_0000375645" description="Succinyl-diaminopimelate desuccinylase">
    <location>
        <begin position="1"/>
        <end position="375"/>
    </location>
</feature>
<feature type="active site" evidence="1">
    <location>
        <position position="68"/>
    </location>
</feature>
<feature type="active site" description="Proton acceptor" evidence="1">
    <location>
        <position position="133"/>
    </location>
</feature>
<feature type="binding site" evidence="1">
    <location>
        <position position="66"/>
    </location>
    <ligand>
        <name>Zn(2+)</name>
        <dbReference type="ChEBI" id="CHEBI:29105"/>
        <label>1</label>
    </ligand>
</feature>
<feature type="binding site" evidence="1">
    <location>
        <position position="99"/>
    </location>
    <ligand>
        <name>Zn(2+)</name>
        <dbReference type="ChEBI" id="CHEBI:29105"/>
        <label>1</label>
    </ligand>
</feature>
<feature type="binding site" evidence="1">
    <location>
        <position position="99"/>
    </location>
    <ligand>
        <name>Zn(2+)</name>
        <dbReference type="ChEBI" id="CHEBI:29105"/>
        <label>2</label>
    </ligand>
</feature>
<feature type="binding site" evidence="1">
    <location>
        <position position="134"/>
    </location>
    <ligand>
        <name>Zn(2+)</name>
        <dbReference type="ChEBI" id="CHEBI:29105"/>
        <label>2</label>
    </ligand>
</feature>
<feature type="binding site" evidence="1">
    <location>
        <position position="162"/>
    </location>
    <ligand>
        <name>Zn(2+)</name>
        <dbReference type="ChEBI" id="CHEBI:29105"/>
        <label>1</label>
    </ligand>
</feature>
<feature type="binding site" evidence="1">
    <location>
        <position position="348"/>
    </location>
    <ligand>
        <name>Zn(2+)</name>
        <dbReference type="ChEBI" id="CHEBI:29105"/>
        <label>2</label>
    </ligand>
</feature>